<proteinExistence type="evidence at protein level"/>
<protein>
    <recommendedName>
        <fullName>Shematrin-like protein 2</fullName>
    </recommendedName>
    <alternativeName>
        <fullName>Shematrin-5</fullName>
    </alternativeName>
</protein>
<name>SLP2_PINMG</name>
<sequence length="223" mass="24113">MRILANLILLGVLFGVCLCQGCGDSDDDGQDDCTGDCGDGDFDGVDDCTGNCGDSDGDGYDDCNDDDSQGAYTYPYGRYLYGRRFGLRRFGNPFFRFRRFGFGPVGGLNFRLGGFGYPYGGYGNLLSRFRGYGGYGNLLGGIRGYGNVLGGYGNVLGGYGNMLGGYGNILGGYGNMLGGYGNLGGYRGYGYQLRGYGGYGSFPDNYGRYSVGSYLRRRRRKKY</sequence>
<organism>
    <name type="scientific">Margaritifera margaritifera</name>
    <name type="common">Freshwater pearl mussel</name>
    <dbReference type="NCBI Taxonomy" id="102329"/>
    <lineage>
        <taxon>Eukaryota</taxon>
        <taxon>Metazoa</taxon>
        <taxon>Spiralia</taxon>
        <taxon>Lophotrochozoa</taxon>
        <taxon>Mollusca</taxon>
        <taxon>Bivalvia</taxon>
        <taxon>Autobranchia</taxon>
        <taxon>Pteriomorphia</taxon>
        <taxon>Pterioida</taxon>
        <taxon>Pterioidea</taxon>
        <taxon>Pteriidae</taxon>
        <taxon>Pinctada</taxon>
    </lineage>
</organism>
<keyword id="KW-0903">Direct protein sequencing</keyword>
<keyword id="KW-0964">Secreted</keyword>
<keyword id="KW-0732">Signal</keyword>
<feature type="signal peptide" evidence="1">
    <location>
        <begin position="1"/>
        <end position="19"/>
    </location>
</feature>
<feature type="chain" id="PRO_0000417982" description="Shematrin-like protein 2" evidence="1">
    <location>
        <begin position="20"/>
        <end position="223"/>
    </location>
</feature>
<comment type="subcellular location">
    <subcellularLocation>
        <location evidence="2">Secreted</location>
    </subcellularLocation>
</comment>
<comment type="tissue specificity">
    <text evidence="2">Prismatic layer of shell (at protein level).</text>
</comment>
<reference evidence="3" key="1">
    <citation type="journal article" date="2010" name="BMC Genomics">
        <title>Transcriptome and proteome analysis of Pinctada margaritifera calcifying mantle and shell: focus on biomineralization.</title>
        <authorList>
            <person name="Joubert C."/>
            <person name="Piquemal D."/>
            <person name="Marie B."/>
            <person name="Manchon L."/>
            <person name="Pierrat F."/>
            <person name="Zanella-Cleon I."/>
            <person name="Cochennec-Laureau N."/>
            <person name="Gueguen Y."/>
            <person name="Montagnani C."/>
        </authorList>
    </citation>
    <scope>NUCLEOTIDE SEQUENCE [MRNA]</scope>
    <scope>IDENTIFICATION</scope>
    <source>
        <tissue>Mantle</tissue>
    </source>
</reference>
<reference key="2">
    <citation type="journal article" date="2012" name="Proc. Natl. Acad. Sci. U.S.A.">
        <title>Different secretory repertoires control the biomineralization processes of prism and nacre deposition of the pearl oyster shell.</title>
        <authorList>
            <person name="Marie B."/>
            <person name="Joubert C."/>
            <person name="Tayale A."/>
            <person name="Zanella-Cleon I."/>
            <person name="Belliard C."/>
            <person name="Piquemal D."/>
            <person name="Cochennec-Laureau N."/>
            <person name="Marin F."/>
            <person name="Gueguen Y."/>
            <person name="Montagnani C."/>
        </authorList>
    </citation>
    <scope>PROTEIN SEQUENCE OF 90-96; 100-111; 131-143 AND 195-208</scope>
    <scope>SUBCELLULAR LOCATION</scope>
    <scope>TISSUE SPECIFICITY</scope>
    <source>
        <tissue>Shell</tissue>
    </source>
</reference>
<accession>H2A0K9</accession>
<evidence type="ECO:0000255" key="1"/>
<evidence type="ECO:0000269" key="2">
    <source>
    </source>
</evidence>
<evidence type="ECO:0000305" key="3"/>
<dbReference type="EMBL" id="HE610376">
    <property type="protein sequence ID" value="CCE46150.1"/>
    <property type="molecule type" value="mRNA"/>
</dbReference>
<dbReference type="GO" id="GO:0005576">
    <property type="term" value="C:extracellular region"/>
    <property type="evidence" value="ECO:0007669"/>
    <property type="project" value="UniProtKB-SubCell"/>
</dbReference>